<reference key="1">
    <citation type="journal article" date="2009" name="Nat. Genet.">
        <title>Comparative genomic and phylogeographic analysis of Mycobacterium leprae.</title>
        <authorList>
            <person name="Monot M."/>
            <person name="Honore N."/>
            <person name="Garnier T."/>
            <person name="Zidane N."/>
            <person name="Sherafi D."/>
            <person name="Paniz-Mondolfi A."/>
            <person name="Matsuoka M."/>
            <person name="Taylor G.M."/>
            <person name="Donoghue H.D."/>
            <person name="Bouwman A."/>
            <person name="Mays S."/>
            <person name="Watson C."/>
            <person name="Lockwood D."/>
            <person name="Khamispour A."/>
            <person name="Dowlati Y."/>
            <person name="Jianping S."/>
            <person name="Rea T.H."/>
            <person name="Vera-Cabrera L."/>
            <person name="Stefani M.M."/>
            <person name="Banu S."/>
            <person name="Macdonald M."/>
            <person name="Sapkota B.R."/>
            <person name="Spencer J.S."/>
            <person name="Thomas J."/>
            <person name="Harshman K."/>
            <person name="Singh P."/>
            <person name="Busso P."/>
            <person name="Gattiker A."/>
            <person name="Rougemont J."/>
            <person name="Brennan P.J."/>
            <person name="Cole S.T."/>
        </authorList>
    </citation>
    <scope>NUCLEOTIDE SEQUENCE [LARGE SCALE GENOMIC DNA]</scope>
    <source>
        <strain>Br4923</strain>
    </source>
</reference>
<name>SYR_MYCLB</name>
<gene>
    <name evidence="1" type="primary">argS</name>
    <name type="ordered locus">MLBr01127</name>
</gene>
<sequence length="550" mass="59603">MTPADLAELLKTTAIVVLAERGLDAAALPQTVTVERPRNPEHGDYSSNLAMQLGKKVGANPLELAGWLAEVLAQAGGIADVEVAGPGFINMRLDASAQAMIVNTVINADKNFGHSDDLAGYQINLEFVSANPTGPIHIGGTRWAAVGDALGRLLSTQGAAVVREYYFNDHGAQIDRFTNSLIAAAKGELTPADGYAGTYVTDIAAQVMQQAPYALSLPESEMHETVREIGVDLMFTHIKKSLHEFGTDFDVYTHEDSMHASGRVDEAIARLRDTGNVYEKDGALWLRTSAFGDDKDRVVIKSDGKPAYIAGDLAYYLDKRQRGFDLCIYMLGADHHGYIARLKAAAAAFGDDPAIVEVLIGQMVNLVCDGQLVRMSKRSGNVITLDDLVEAIGVDAARYSLIRSSVDTPIDIDLALWSSSSNENPVYYVQYAHARLSALARNAAEFGLIPDTGHLELLSHDKEGALLRTVGEFPQVLKTAAALREPHRVCRYLEDLAGDYHRFYDSCRVLPQGDEKPTDLHTARLALCQANRQVIANGLAILGVSAPERM</sequence>
<keyword id="KW-0030">Aminoacyl-tRNA synthetase</keyword>
<keyword id="KW-0067">ATP-binding</keyword>
<keyword id="KW-0963">Cytoplasm</keyword>
<keyword id="KW-0436">Ligase</keyword>
<keyword id="KW-0547">Nucleotide-binding</keyword>
<keyword id="KW-0648">Protein biosynthesis</keyword>
<feature type="chain" id="PRO_1000198925" description="Arginine--tRNA ligase">
    <location>
        <begin position="1"/>
        <end position="550"/>
    </location>
</feature>
<feature type="short sequence motif" description="'HIGH' region">
    <location>
        <begin position="130"/>
        <end position="140"/>
    </location>
</feature>
<protein>
    <recommendedName>
        <fullName evidence="1">Arginine--tRNA ligase</fullName>
        <ecNumber evidence="1">6.1.1.19</ecNumber>
    </recommendedName>
    <alternativeName>
        <fullName evidence="1">Arginyl-tRNA synthetase</fullName>
        <shortName evidence="1">ArgRS</shortName>
    </alternativeName>
</protein>
<accession>B8ZR24</accession>
<comment type="catalytic activity">
    <reaction evidence="1">
        <text>tRNA(Arg) + L-arginine + ATP = L-arginyl-tRNA(Arg) + AMP + diphosphate</text>
        <dbReference type="Rhea" id="RHEA:20301"/>
        <dbReference type="Rhea" id="RHEA-COMP:9658"/>
        <dbReference type="Rhea" id="RHEA-COMP:9673"/>
        <dbReference type="ChEBI" id="CHEBI:30616"/>
        <dbReference type="ChEBI" id="CHEBI:32682"/>
        <dbReference type="ChEBI" id="CHEBI:33019"/>
        <dbReference type="ChEBI" id="CHEBI:78442"/>
        <dbReference type="ChEBI" id="CHEBI:78513"/>
        <dbReference type="ChEBI" id="CHEBI:456215"/>
        <dbReference type="EC" id="6.1.1.19"/>
    </reaction>
</comment>
<comment type="subunit">
    <text evidence="1">Monomer.</text>
</comment>
<comment type="subcellular location">
    <subcellularLocation>
        <location evidence="1">Cytoplasm</location>
    </subcellularLocation>
</comment>
<comment type="similarity">
    <text evidence="1">Belongs to the class-I aminoacyl-tRNA synthetase family.</text>
</comment>
<organism>
    <name type="scientific">Mycobacterium leprae (strain Br4923)</name>
    <dbReference type="NCBI Taxonomy" id="561304"/>
    <lineage>
        <taxon>Bacteria</taxon>
        <taxon>Bacillati</taxon>
        <taxon>Actinomycetota</taxon>
        <taxon>Actinomycetes</taxon>
        <taxon>Mycobacteriales</taxon>
        <taxon>Mycobacteriaceae</taxon>
        <taxon>Mycobacterium</taxon>
    </lineage>
</organism>
<proteinExistence type="inferred from homology"/>
<dbReference type="EC" id="6.1.1.19" evidence="1"/>
<dbReference type="EMBL" id="FM211192">
    <property type="protein sequence ID" value="CAR71222.1"/>
    <property type="molecule type" value="Genomic_DNA"/>
</dbReference>
<dbReference type="SMR" id="B8ZR24"/>
<dbReference type="KEGG" id="mlb:MLBr01127"/>
<dbReference type="HOGENOM" id="CLU_006406_0_1_11"/>
<dbReference type="Proteomes" id="UP000006900">
    <property type="component" value="Chromosome"/>
</dbReference>
<dbReference type="GO" id="GO:0005737">
    <property type="term" value="C:cytoplasm"/>
    <property type="evidence" value="ECO:0007669"/>
    <property type="project" value="UniProtKB-SubCell"/>
</dbReference>
<dbReference type="GO" id="GO:0004814">
    <property type="term" value="F:arginine-tRNA ligase activity"/>
    <property type="evidence" value="ECO:0007669"/>
    <property type="project" value="UniProtKB-UniRule"/>
</dbReference>
<dbReference type="GO" id="GO:0005524">
    <property type="term" value="F:ATP binding"/>
    <property type="evidence" value="ECO:0007669"/>
    <property type="project" value="UniProtKB-UniRule"/>
</dbReference>
<dbReference type="GO" id="GO:0006420">
    <property type="term" value="P:arginyl-tRNA aminoacylation"/>
    <property type="evidence" value="ECO:0007669"/>
    <property type="project" value="UniProtKB-UniRule"/>
</dbReference>
<dbReference type="CDD" id="cd07956">
    <property type="entry name" value="Anticodon_Ia_Arg"/>
    <property type="match status" value="1"/>
</dbReference>
<dbReference type="CDD" id="cd00671">
    <property type="entry name" value="ArgRS_core"/>
    <property type="match status" value="1"/>
</dbReference>
<dbReference type="FunFam" id="1.10.730.10:FF:000008">
    <property type="entry name" value="Arginine--tRNA ligase"/>
    <property type="match status" value="1"/>
</dbReference>
<dbReference type="FunFam" id="3.30.1360.70:FF:000003">
    <property type="entry name" value="Arginine--tRNA ligase"/>
    <property type="match status" value="1"/>
</dbReference>
<dbReference type="FunFam" id="3.40.50.620:FF:000062">
    <property type="entry name" value="Arginine--tRNA ligase"/>
    <property type="match status" value="1"/>
</dbReference>
<dbReference type="Gene3D" id="3.30.1360.70">
    <property type="entry name" value="Arginyl tRNA synthetase N-terminal domain"/>
    <property type="match status" value="1"/>
</dbReference>
<dbReference type="Gene3D" id="3.40.50.620">
    <property type="entry name" value="HUPs"/>
    <property type="match status" value="1"/>
</dbReference>
<dbReference type="Gene3D" id="1.10.730.10">
    <property type="entry name" value="Isoleucyl-tRNA Synthetase, Domain 1"/>
    <property type="match status" value="1"/>
</dbReference>
<dbReference type="HAMAP" id="MF_00123">
    <property type="entry name" value="Arg_tRNA_synth"/>
    <property type="match status" value="1"/>
</dbReference>
<dbReference type="InterPro" id="IPR001412">
    <property type="entry name" value="aa-tRNA-synth_I_CS"/>
</dbReference>
<dbReference type="InterPro" id="IPR001278">
    <property type="entry name" value="Arg-tRNA-ligase"/>
</dbReference>
<dbReference type="InterPro" id="IPR005148">
    <property type="entry name" value="Arg-tRNA-synth_N"/>
</dbReference>
<dbReference type="InterPro" id="IPR036695">
    <property type="entry name" value="Arg-tRNA-synth_N_sf"/>
</dbReference>
<dbReference type="InterPro" id="IPR035684">
    <property type="entry name" value="ArgRS_core"/>
</dbReference>
<dbReference type="InterPro" id="IPR008909">
    <property type="entry name" value="DALR_anticod-bd"/>
</dbReference>
<dbReference type="InterPro" id="IPR014729">
    <property type="entry name" value="Rossmann-like_a/b/a_fold"/>
</dbReference>
<dbReference type="InterPro" id="IPR009080">
    <property type="entry name" value="tRNAsynth_Ia_anticodon-bd"/>
</dbReference>
<dbReference type="NCBIfam" id="TIGR00456">
    <property type="entry name" value="argS"/>
    <property type="match status" value="1"/>
</dbReference>
<dbReference type="PANTHER" id="PTHR11956:SF5">
    <property type="entry name" value="ARGININE--TRNA LIGASE, CYTOPLASMIC"/>
    <property type="match status" value="1"/>
</dbReference>
<dbReference type="PANTHER" id="PTHR11956">
    <property type="entry name" value="ARGINYL-TRNA SYNTHETASE"/>
    <property type="match status" value="1"/>
</dbReference>
<dbReference type="Pfam" id="PF03485">
    <property type="entry name" value="Arg_tRNA_synt_N"/>
    <property type="match status" value="1"/>
</dbReference>
<dbReference type="Pfam" id="PF05746">
    <property type="entry name" value="DALR_1"/>
    <property type="match status" value="1"/>
</dbReference>
<dbReference type="Pfam" id="PF00750">
    <property type="entry name" value="tRNA-synt_1d"/>
    <property type="match status" value="1"/>
</dbReference>
<dbReference type="PRINTS" id="PR01038">
    <property type="entry name" value="TRNASYNTHARG"/>
</dbReference>
<dbReference type="SMART" id="SM01016">
    <property type="entry name" value="Arg_tRNA_synt_N"/>
    <property type="match status" value="1"/>
</dbReference>
<dbReference type="SMART" id="SM00836">
    <property type="entry name" value="DALR_1"/>
    <property type="match status" value="1"/>
</dbReference>
<dbReference type="SUPFAM" id="SSF47323">
    <property type="entry name" value="Anticodon-binding domain of a subclass of class I aminoacyl-tRNA synthetases"/>
    <property type="match status" value="1"/>
</dbReference>
<dbReference type="SUPFAM" id="SSF55190">
    <property type="entry name" value="Arginyl-tRNA synthetase (ArgRS), N-terminal 'additional' domain"/>
    <property type="match status" value="1"/>
</dbReference>
<dbReference type="SUPFAM" id="SSF52374">
    <property type="entry name" value="Nucleotidylyl transferase"/>
    <property type="match status" value="1"/>
</dbReference>
<dbReference type="PROSITE" id="PS00178">
    <property type="entry name" value="AA_TRNA_LIGASE_I"/>
    <property type="match status" value="1"/>
</dbReference>
<evidence type="ECO:0000255" key="1">
    <source>
        <dbReference type="HAMAP-Rule" id="MF_00123"/>
    </source>
</evidence>